<accession>Q6ZDQ1</accession>
<accession>A0A0N7KN29</accession>
<accession>Q0D7Z2</accession>
<gene>
    <name evidence="4" type="ordered locus">Os07g0195400</name>
    <name evidence="3" type="ordered locus">LOC_Os07g09720</name>
    <name type="ORF">OJ1715_A07.21</name>
    <name evidence="5" type="ORF">OsJ_23435</name>
    <name type="ORF">P0589E08.4</name>
</gene>
<feature type="chain" id="PRO_0000247307" description="Phosphoacetylglucosamine mutase">
    <location>
        <begin position="1"/>
        <end position="562"/>
    </location>
</feature>
<feature type="active site" description="Phosphoserine intermediate" evidence="2">
    <location>
        <position position="74"/>
    </location>
</feature>
<feature type="binding site" description="via phosphate group" evidence="2">
    <location>
        <position position="74"/>
    </location>
    <ligand>
        <name>Mg(2+)</name>
        <dbReference type="ChEBI" id="CHEBI:18420"/>
    </ligand>
</feature>
<feature type="binding site" evidence="2">
    <location>
        <position position="291"/>
    </location>
    <ligand>
        <name>Mg(2+)</name>
        <dbReference type="ChEBI" id="CHEBI:18420"/>
    </ligand>
</feature>
<feature type="binding site" evidence="2">
    <location>
        <position position="293"/>
    </location>
    <ligand>
        <name>Mg(2+)</name>
        <dbReference type="ChEBI" id="CHEBI:18420"/>
    </ligand>
</feature>
<feature type="binding site" evidence="2">
    <location>
        <position position="295"/>
    </location>
    <ligand>
        <name>Mg(2+)</name>
        <dbReference type="ChEBI" id="CHEBI:18420"/>
    </ligand>
</feature>
<feature type="binding site" evidence="2">
    <location>
        <begin position="395"/>
        <end position="397"/>
    </location>
    <ligand>
        <name>substrate</name>
    </ligand>
</feature>
<feature type="binding site" evidence="2">
    <location>
        <begin position="526"/>
        <end position="530"/>
    </location>
    <ligand>
        <name>substrate</name>
    </ligand>
</feature>
<feature type="binding site" evidence="2">
    <location>
        <position position="535"/>
    </location>
    <ligand>
        <name>substrate</name>
    </ligand>
</feature>
<feature type="sequence conflict" description="In Ref. 5; AK069901." evidence="3" ref="5">
    <original>K</original>
    <variation>E</variation>
    <location>
        <position position="211"/>
    </location>
</feature>
<name>AGM1_ORYSJ</name>
<proteinExistence type="evidence at transcript level"/>
<evidence type="ECO:0000250" key="1"/>
<evidence type="ECO:0000250" key="2">
    <source>
        <dbReference type="UniProtKB" id="Q9P4V2"/>
    </source>
</evidence>
<evidence type="ECO:0000305" key="3"/>
<evidence type="ECO:0000312" key="4">
    <source>
        <dbReference type="EMBL" id="BAF21031.1"/>
    </source>
</evidence>
<evidence type="ECO:0000312" key="5">
    <source>
        <dbReference type="EMBL" id="EEE66741.1"/>
    </source>
</evidence>
<protein>
    <recommendedName>
        <fullName>Phosphoacetylglucosamine mutase</fullName>
        <shortName>PAGM</shortName>
        <ecNumber>5.4.2.3</ecNumber>
    </recommendedName>
    <alternativeName>
        <fullName>Acetylglucosamine phosphomutase</fullName>
    </alternativeName>
    <alternativeName>
        <fullName>N-acetylglucosamine-phosphate mutase</fullName>
    </alternativeName>
</protein>
<reference key="1">
    <citation type="journal article" date="2005" name="Nature">
        <title>The map-based sequence of the rice genome.</title>
        <authorList>
            <consortium name="International rice genome sequencing project (IRGSP)"/>
        </authorList>
    </citation>
    <scope>NUCLEOTIDE SEQUENCE [LARGE SCALE GENOMIC DNA]</scope>
    <source>
        <strain>cv. Nipponbare</strain>
    </source>
</reference>
<reference key="2">
    <citation type="journal article" date="2008" name="Nucleic Acids Res.">
        <title>The rice annotation project database (RAP-DB): 2008 update.</title>
        <authorList>
            <consortium name="The rice annotation project (RAP)"/>
        </authorList>
    </citation>
    <scope>GENOME REANNOTATION</scope>
    <source>
        <strain>cv. Nipponbare</strain>
    </source>
</reference>
<reference key="3">
    <citation type="journal article" date="2013" name="Rice">
        <title>Improvement of the Oryza sativa Nipponbare reference genome using next generation sequence and optical map data.</title>
        <authorList>
            <person name="Kawahara Y."/>
            <person name="de la Bastide M."/>
            <person name="Hamilton J.P."/>
            <person name="Kanamori H."/>
            <person name="McCombie W.R."/>
            <person name="Ouyang S."/>
            <person name="Schwartz D.C."/>
            <person name="Tanaka T."/>
            <person name="Wu J."/>
            <person name="Zhou S."/>
            <person name="Childs K.L."/>
            <person name="Davidson R.M."/>
            <person name="Lin H."/>
            <person name="Quesada-Ocampo L."/>
            <person name="Vaillancourt B."/>
            <person name="Sakai H."/>
            <person name="Lee S.S."/>
            <person name="Kim J."/>
            <person name="Numa H."/>
            <person name="Itoh T."/>
            <person name="Buell C.R."/>
            <person name="Matsumoto T."/>
        </authorList>
    </citation>
    <scope>GENOME REANNOTATION</scope>
    <source>
        <strain>cv. Nipponbare</strain>
    </source>
</reference>
<reference key="4">
    <citation type="journal article" date="2005" name="PLoS Biol.">
        <title>The genomes of Oryza sativa: a history of duplications.</title>
        <authorList>
            <person name="Yu J."/>
            <person name="Wang J."/>
            <person name="Lin W."/>
            <person name="Li S."/>
            <person name="Li H."/>
            <person name="Zhou J."/>
            <person name="Ni P."/>
            <person name="Dong W."/>
            <person name="Hu S."/>
            <person name="Zeng C."/>
            <person name="Zhang J."/>
            <person name="Zhang Y."/>
            <person name="Li R."/>
            <person name="Xu Z."/>
            <person name="Li S."/>
            <person name="Li X."/>
            <person name="Zheng H."/>
            <person name="Cong L."/>
            <person name="Lin L."/>
            <person name="Yin J."/>
            <person name="Geng J."/>
            <person name="Li G."/>
            <person name="Shi J."/>
            <person name="Liu J."/>
            <person name="Lv H."/>
            <person name="Li J."/>
            <person name="Wang J."/>
            <person name="Deng Y."/>
            <person name="Ran L."/>
            <person name="Shi X."/>
            <person name="Wang X."/>
            <person name="Wu Q."/>
            <person name="Li C."/>
            <person name="Ren X."/>
            <person name="Wang J."/>
            <person name="Wang X."/>
            <person name="Li D."/>
            <person name="Liu D."/>
            <person name="Zhang X."/>
            <person name="Ji Z."/>
            <person name="Zhao W."/>
            <person name="Sun Y."/>
            <person name="Zhang Z."/>
            <person name="Bao J."/>
            <person name="Han Y."/>
            <person name="Dong L."/>
            <person name="Ji J."/>
            <person name="Chen P."/>
            <person name="Wu S."/>
            <person name="Liu J."/>
            <person name="Xiao Y."/>
            <person name="Bu D."/>
            <person name="Tan J."/>
            <person name="Yang L."/>
            <person name="Ye C."/>
            <person name="Zhang J."/>
            <person name="Xu J."/>
            <person name="Zhou Y."/>
            <person name="Yu Y."/>
            <person name="Zhang B."/>
            <person name="Zhuang S."/>
            <person name="Wei H."/>
            <person name="Liu B."/>
            <person name="Lei M."/>
            <person name="Yu H."/>
            <person name="Li Y."/>
            <person name="Xu H."/>
            <person name="Wei S."/>
            <person name="He X."/>
            <person name="Fang L."/>
            <person name="Zhang Z."/>
            <person name="Zhang Y."/>
            <person name="Huang X."/>
            <person name="Su Z."/>
            <person name="Tong W."/>
            <person name="Li J."/>
            <person name="Tong Z."/>
            <person name="Li S."/>
            <person name="Ye J."/>
            <person name="Wang L."/>
            <person name="Fang L."/>
            <person name="Lei T."/>
            <person name="Chen C.-S."/>
            <person name="Chen H.-C."/>
            <person name="Xu Z."/>
            <person name="Li H."/>
            <person name="Huang H."/>
            <person name="Zhang F."/>
            <person name="Xu H."/>
            <person name="Li N."/>
            <person name="Zhao C."/>
            <person name="Li S."/>
            <person name="Dong L."/>
            <person name="Huang Y."/>
            <person name="Li L."/>
            <person name="Xi Y."/>
            <person name="Qi Q."/>
            <person name="Li W."/>
            <person name="Zhang B."/>
            <person name="Hu W."/>
            <person name="Zhang Y."/>
            <person name="Tian X."/>
            <person name="Jiao Y."/>
            <person name="Liang X."/>
            <person name="Jin J."/>
            <person name="Gao L."/>
            <person name="Zheng W."/>
            <person name="Hao B."/>
            <person name="Liu S.-M."/>
            <person name="Wang W."/>
            <person name="Yuan L."/>
            <person name="Cao M."/>
            <person name="McDermott J."/>
            <person name="Samudrala R."/>
            <person name="Wang J."/>
            <person name="Wong G.K.-S."/>
            <person name="Yang H."/>
        </authorList>
    </citation>
    <scope>NUCLEOTIDE SEQUENCE [LARGE SCALE GENOMIC DNA]</scope>
    <source>
        <strain>cv. Nipponbare</strain>
    </source>
</reference>
<reference key="5">
    <citation type="journal article" date="2003" name="Science">
        <title>Collection, mapping, and annotation of over 28,000 cDNA clones from japonica rice.</title>
        <authorList>
            <consortium name="The rice full-length cDNA consortium"/>
        </authorList>
    </citation>
    <scope>NUCLEOTIDE SEQUENCE [LARGE SCALE MRNA]</scope>
    <source>
        <strain>cv. Nipponbare</strain>
    </source>
</reference>
<dbReference type="EC" id="5.4.2.3"/>
<dbReference type="EMBL" id="AP003848">
    <property type="protein sequence ID" value="BAD30377.1"/>
    <property type="molecule type" value="Genomic_DNA"/>
</dbReference>
<dbReference type="EMBL" id="AP004379">
    <property type="protein sequence ID" value="BAC83577.1"/>
    <property type="molecule type" value="Genomic_DNA"/>
</dbReference>
<dbReference type="EMBL" id="AP008213">
    <property type="protein sequence ID" value="BAF21031.1"/>
    <property type="molecule type" value="Genomic_DNA"/>
</dbReference>
<dbReference type="EMBL" id="AP014963">
    <property type="protein sequence ID" value="BAT00466.1"/>
    <property type="molecule type" value="Genomic_DNA"/>
</dbReference>
<dbReference type="EMBL" id="CM000144">
    <property type="protein sequence ID" value="EEE66741.1"/>
    <property type="molecule type" value="Genomic_DNA"/>
</dbReference>
<dbReference type="EMBL" id="AK069901">
    <property type="status" value="NOT_ANNOTATED_CDS"/>
    <property type="molecule type" value="mRNA"/>
</dbReference>
<dbReference type="RefSeq" id="XP_015644787.1">
    <property type="nucleotide sequence ID" value="XM_015789301.1"/>
</dbReference>
<dbReference type="SMR" id="Q6ZDQ1"/>
<dbReference type="FunCoup" id="Q6ZDQ1">
    <property type="interactions" value="3177"/>
</dbReference>
<dbReference type="STRING" id="39947.Q6ZDQ1"/>
<dbReference type="PaxDb" id="39947-Q6ZDQ1"/>
<dbReference type="EnsemblPlants" id="Os07t0195400-01">
    <property type="protein sequence ID" value="Os07t0195400-01"/>
    <property type="gene ID" value="Os07g0195400"/>
</dbReference>
<dbReference type="Gramene" id="Os07t0195400-01">
    <property type="protein sequence ID" value="Os07t0195400-01"/>
    <property type="gene ID" value="Os07g0195400"/>
</dbReference>
<dbReference type="KEGG" id="dosa:Os07g0195400"/>
<dbReference type="eggNOG" id="KOG2537">
    <property type="taxonomic scope" value="Eukaryota"/>
</dbReference>
<dbReference type="HOGENOM" id="CLU_022890_1_0_1"/>
<dbReference type="InParanoid" id="Q6ZDQ1"/>
<dbReference type="OMA" id="WEAYATK"/>
<dbReference type="OrthoDB" id="1928at2759"/>
<dbReference type="PlantReactome" id="R-OSA-1119386">
    <property type="pathway name" value="UDP-N-acetylgalactosamine biosynthesis"/>
</dbReference>
<dbReference type="UniPathway" id="UPA00113">
    <property type="reaction ID" value="UER00530"/>
</dbReference>
<dbReference type="Proteomes" id="UP000000763">
    <property type="component" value="Chromosome 7"/>
</dbReference>
<dbReference type="Proteomes" id="UP000007752">
    <property type="component" value="Chromosome 7"/>
</dbReference>
<dbReference type="Proteomes" id="UP000059680">
    <property type="component" value="Chromosome 7"/>
</dbReference>
<dbReference type="GO" id="GO:0000287">
    <property type="term" value="F:magnesium ion binding"/>
    <property type="evidence" value="ECO:0007669"/>
    <property type="project" value="InterPro"/>
</dbReference>
<dbReference type="GO" id="GO:0004610">
    <property type="term" value="F:phosphoacetylglucosamine mutase activity"/>
    <property type="evidence" value="ECO:0000318"/>
    <property type="project" value="GO_Central"/>
</dbReference>
<dbReference type="GO" id="GO:0005975">
    <property type="term" value="P:carbohydrate metabolic process"/>
    <property type="evidence" value="ECO:0007669"/>
    <property type="project" value="InterPro"/>
</dbReference>
<dbReference type="GO" id="GO:0006048">
    <property type="term" value="P:UDP-N-acetylglucosamine biosynthetic process"/>
    <property type="evidence" value="ECO:0000318"/>
    <property type="project" value="GO_Central"/>
</dbReference>
<dbReference type="CDD" id="cd03086">
    <property type="entry name" value="PGM3"/>
    <property type="match status" value="1"/>
</dbReference>
<dbReference type="FunFam" id="3.30.310.50:FF:000003">
    <property type="entry name" value="Phosphoacetylglucosamine mutase"/>
    <property type="match status" value="1"/>
</dbReference>
<dbReference type="FunFam" id="3.40.120.10:FF:000013">
    <property type="entry name" value="Phosphoacetylglucosamine mutase"/>
    <property type="match status" value="1"/>
</dbReference>
<dbReference type="FunFam" id="3.40.120.10:FF:000054">
    <property type="entry name" value="Phosphoacetylglucosamine mutase"/>
    <property type="match status" value="1"/>
</dbReference>
<dbReference type="Gene3D" id="3.40.120.10">
    <property type="entry name" value="Alpha-D-Glucose-1,6-Bisphosphate, subunit A, domain 3"/>
    <property type="match status" value="3"/>
</dbReference>
<dbReference type="Gene3D" id="3.30.310.50">
    <property type="entry name" value="Alpha-D-phosphohexomutase, C-terminal domain"/>
    <property type="match status" value="1"/>
</dbReference>
<dbReference type="InterPro" id="IPR005844">
    <property type="entry name" value="A-D-PHexomutase_a/b/a-I"/>
</dbReference>
<dbReference type="InterPro" id="IPR016055">
    <property type="entry name" value="A-D-PHexomutase_a/b/a-I/II/III"/>
</dbReference>
<dbReference type="InterPro" id="IPR005843">
    <property type="entry name" value="A-D-PHexomutase_C"/>
</dbReference>
<dbReference type="InterPro" id="IPR036900">
    <property type="entry name" value="A-D-PHexomutase_C_sf"/>
</dbReference>
<dbReference type="InterPro" id="IPR016066">
    <property type="entry name" value="A-D-PHexomutase_CS"/>
</dbReference>
<dbReference type="InterPro" id="IPR049023">
    <property type="entry name" value="AMG1_II"/>
</dbReference>
<dbReference type="InterPro" id="IPR049022">
    <property type="entry name" value="AMG1_III"/>
</dbReference>
<dbReference type="InterPro" id="IPR016657">
    <property type="entry name" value="PAGM"/>
</dbReference>
<dbReference type="PANTHER" id="PTHR45955">
    <property type="entry name" value="PHOSPHOACETYLGLUCOSAMINE MUTASE"/>
    <property type="match status" value="1"/>
</dbReference>
<dbReference type="PANTHER" id="PTHR45955:SF1">
    <property type="entry name" value="PHOSPHOACETYLGLUCOSAMINE MUTASE"/>
    <property type="match status" value="1"/>
</dbReference>
<dbReference type="Pfam" id="PF21405">
    <property type="entry name" value="AMG1_II"/>
    <property type="match status" value="1"/>
</dbReference>
<dbReference type="Pfam" id="PF21404">
    <property type="entry name" value="AMG1_III"/>
    <property type="match status" value="1"/>
</dbReference>
<dbReference type="Pfam" id="PF02878">
    <property type="entry name" value="PGM_PMM_I"/>
    <property type="match status" value="1"/>
</dbReference>
<dbReference type="Pfam" id="PF00408">
    <property type="entry name" value="PGM_PMM_IV"/>
    <property type="match status" value="1"/>
</dbReference>
<dbReference type="PIRSF" id="PIRSF016408">
    <property type="entry name" value="PAGM"/>
    <property type="match status" value="1"/>
</dbReference>
<dbReference type="SUPFAM" id="SSF55957">
    <property type="entry name" value="Phosphoglucomutase, C-terminal domain"/>
    <property type="match status" value="1"/>
</dbReference>
<dbReference type="SUPFAM" id="SSF53738">
    <property type="entry name" value="Phosphoglucomutase, first 3 domains"/>
    <property type="match status" value="4"/>
</dbReference>
<dbReference type="PROSITE" id="PS00710">
    <property type="entry name" value="PGM_PMM"/>
    <property type="match status" value="1"/>
</dbReference>
<comment type="function">
    <text evidence="1">Interconverts GlcNAc-6-P and GlcNAc-1-P.</text>
</comment>
<comment type="catalytic activity">
    <reaction>
        <text>N-acetyl-alpha-D-glucosamine 1-phosphate = N-acetyl-D-glucosamine 6-phosphate</text>
        <dbReference type="Rhea" id="RHEA:23804"/>
        <dbReference type="ChEBI" id="CHEBI:57513"/>
        <dbReference type="ChEBI" id="CHEBI:57776"/>
        <dbReference type="EC" id="5.4.2.3"/>
    </reaction>
</comment>
<comment type="cofactor">
    <cofactor evidence="2">
        <name>Mg(2+)</name>
        <dbReference type="ChEBI" id="CHEBI:18420"/>
    </cofactor>
    <text evidence="2">Binds 1 Mg(2+) ion per subunit.</text>
</comment>
<comment type="pathway">
    <text>Nucleotide-sugar biosynthesis; UDP-N-acetyl-alpha-D-glucosamine biosynthesis; N-acetyl-alpha-D-glucosamine 1-phosphate from alpha-D-glucosamine 6-phosphate (route I): step 2/2.</text>
</comment>
<comment type="similarity">
    <text evidence="3">Belongs to the phosphohexose mutase family.</text>
</comment>
<keyword id="KW-0413">Isomerase</keyword>
<keyword id="KW-0460">Magnesium</keyword>
<keyword id="KW-0479">Metal-binding</keyword>
<keyword id="KW-0597">Phosphoprotein</keyword>
<keyword id="KW-1185">Reference proteome</keyword>
<sequence length="562" mass="60344">MAELAAGGDQRAALLAAATLFPPPPDGARFSYGTAGFRAEGAAMGPAVCRAGVVAALRSAKLGGAAVGVVITASHNPVRDNGVKIVDADGGMLSQDWEPFADALANAPNPDALLQIVLQFAKDEDIKLGGSHSAQVLLARDTRPTGEYLLDVAVKGVNAVIGAVAVDMGILTTPQLHWMVRSKNKGLKSSETDYFSQVIDSFRCLLELVPKDKEADVINNRLIVDGANGIGGLKLEEIKAKISGLDIHVRNSGKGEGILNESCGADFVQKEKVVPLGFGPEDVGFRCASFDGDADRLVYFRIVSSSDTRIDLVDGDKILSLFVLFIREQLDIINGKDNKGNEVLPTRFGVIQTAYANGASTDFLKNIGLEVVFTPTGVKYLHKEALKYDIGIYFEANGHGTVLFSDHFVSQLESLTSEFSSKAAGSSQHQAAMRLLATSQLINQAVGDALSGMLLVEAVLQYKGWSFQNWCDLYTDLPSRQLKVKVQDRNSIVTTDAERRVCQPNGLQELIDGEISNYSHGRCFVRPSGTEDVVRVYAEASSEEAADCLAKRVAQHVERILG</sequence>
<organism>
    <name type="scientific">Oryza sativa subsp. japonica</name>
    <name type="common">Rice</name>
    <dbReference type="NCBI Taxonomy" id="39947"/>
    <lineage>
        <taxon>Eukaryota</taxon>
        <taxon>Viridiplantae</taxon>
        <taxon>Streptophyta</taxon>
        <taxon>Embryophyta</taxon>
        <taxon>Tracheophyta</taxon>
        <taxon>Spermatophyta</taxon>
        <taxon>Magnoliopsida</taxon>
        <taxon>Liliopsida</taxon>
        <taxon>Poales</taxon>
        <taxon>Poaceae</taxon>
        <taxon>BOP clade</taxon>
        <taxon>Oryzoideae</taxon>
        <taxon>Oryzeae</taxon>
        <taxon>Oryzinae</taxon>
        <taxon>Oryza</taxon>
        <taxon>Oryza sativa</taxon>
    </lineage>
</organism>